<protein>
    <recommendedName>
        <fullName>Ribonuclease 3</fullName>
        <ecNumber>3.1.26.3</ecNumber>
    </recommendedName>
    <alternativeName>
        <fullName>Ribonuclease III</fullName>
        <shortName>RNase III</shortName>
    </alternativeName>
</protein>
<organism>
    <name type="scientific">Mycobacterium tuberculosis (strain ATCC 25618 / H37Rv)</name>
    <dbReference type="NCBI Taxonomy" id="83332"/>
    <lineage>
        <taxon>Bacteria</taxon>
        <taxon>Bacillati</taxon>
        <taxon>Actinomycetota</taxon>
        <taxon>Actinomycetes</taxon>
        <taxon>Mycobacteriales</taxon>
        <taxon>Mycobacteriaceae</taxon>
        <taxon>Mycobacterium</taxon>
        <taxon>Mycobacterium tuberculosis complex</taxon>
    </lineage>
</organism>
<comment type="function">
    <text evidence="1">Digests double-stranded RNA. Involved in the processing of primary rRNA transcript to yield the immediate precursors to the large and small rRNAs (23S and 16S). Processes some mRNAs, and tRNAs when they are encoded in the rRNA operon. Processes pre-crRNA and tracrRNA of type II CRISPR loci if present in the organism (By similarity).</text>
</comment>
<comment type="catalytic activity">
    <reaction>
        <text>Endonucleolytic cleavage to 5'-phosphomonoester.</text>
        <dbReference type="EC" id="3.1.26.3"/>
    </reaction>
</comment>
<comment type="cofactor">
    <cofactor evidence="1">
        <name>Mg(2+)</name>
        <dbReference type="ChEBI" id="CHEBI:18420"/>
    </cofactor>
</comment>
<comment type="subunit">
    <text evidence="3">Homodimer.</text>
</comment>
<comment type="subcellular location">
    <subcellularLocation>
        <location evidence="1">Cytoplasm</location>
    </subcellularLocation>
</comment>
<comment type="miscellaneous">
    <text>Was identified as a high-confidence drug target.</text>
</comment>
<comment type="similarity">
    <text evidence="4">Belongs to the ribonuclease III family.</text>
</comment>
<evidence type="ECO:0000250" key="1"/>
<evidence type="ECO:0000255" key="2"/>
<evidence type="ECO:0000269" key="3">
    <source>
    </source>
</evidence>
<evidence type="ECO:0000305" key="4"/>
<evidence type="ECO:0007829" key="5">
    <source>
        <dbReference type="PDB" id="2A11"/>
    </source>
</evidence>
<feature type="chain" id="PRO_0000180413" description="Ribonuclease 3">
    <location>
        <begin position="1"/>
        <end position="240"/>
    </location>
</feature>
<feature type="domain" description="RNase III">
    <location>
        <begin position="19"/>
        <end position="134"/>
    </location>
</feature>
<feature type="domain" description="DRBM">
    <location>
        <begin position="161"/>
        <end position="229"/>
    </location>
</feature>
<feature type="active site" evidence="2">
    <location>
        <position position="48"/>
    </location>
</feature>
<feature type="active site" evidence="1">
    <location>
        <position position="123"/>
    </location>
</feature>
<feature type="binding site" evidence="1">
    <location>
        <position position="44"/>
    </location>
    <ligand>
        <name>Mg(2+)</name>
        <dbReference type="ChEBI" id="CHEBI:18420"/>
    </ligand>
</feature>
<feature type="binding site" evidence="1">
    <location>
        <position position="120"/>
    </location>
    <ligand>
        <name>Mg(2+)</name>
        <dbReference type="ChEBI" id="CHEBI:18420"/>
    </ligand>
</feature>
<feature type="binding site" evidence="1">
    <location>
        <position position="123"/>
    </location>
    <ligand>
        <name>Mg(2+)</name>
        <dbReference type="ChEBI" id="CHEBI:18420"/>
    </ligand>
</feature>
<feature type="helix" evidence="5">
    <location>
        <begin position="6"/>
        <end position="12"/>
    </location>
</feature>
<feature type="helix" evidence="5">
    <location>
        <begin position="18"/>
        <end position="24"/>
    </location>
</feature>
<feature type="helix" evidence="5">
    <location>
        <begin position="28"/>
        <end position="33"/>
    </location>
</feature>
<feature type="helix" evidence="5">
    <location>
        <begin position="41"/>
        <end position="62"/>
    </location>
</feature>
<feature type="helix" evidence="5">
    <location>
        <begin position="68"/>
        <end position="79"/>
    </location>
</feature>
<feature type="helix" evidence="5">
    <location>
        <begin position="81"/>
        <end position="90"/>
    </location>
</feature>
<feature type="strand" evidence="5">
    <location>
        <begin position="91"/>
        <end position="94"/>
    </location>
</feature>
<feature type="helix" evidence="5">
    <location>
        <begin position="97"/>
        <end position="99"/>
    </location>
</feature>
<feature type="helix" evidence="5">
    <location>
        <begin position="104"/>
        <end position="108"/>
    </location>
</feature>
<feature type="helix" evidence="5">
    <location>
        <begin position="111"/>
        <end position="113"/>
    </location>
</feature>
<feature type="helix" evidence="5">
    <location>
        <begin position="115"/>
        <end position="133"/>
    </location>
</feature>
<feature type="helix" evidence="5">
    <location>
        <begin position="135"/>
        <end position="145"/>
    </location>
</feature>
<feature type="helix" evidence="5">
    <location>
        <begin position="147"/>
        <end position="152"/>
    </location>
</feature>
<accession>P9WH03</accession>
<accession>L0TDT0</accession>
<accession>P66666</accession>
<accession>Q10962</accession>
<dbReference type="EC" id="3.1.26.3"/>
<dbReference type="EMBL" id="AL123456">
    <property type="protein sequence ID" value="CCP45728.1"/>
    <property type="molecule type" value="Genomic_DNA"/>
</dbReference>
<dbReference type="PIR" id="E70748">
    <property type="entry name" value="E70748"/>
</dbReference>
<dbReference type="RefSeq" id="NP_217441.1">
    <property type="nucleotide sequence ID" value="NC_000962.3"/>
</dbReference>
<dbReference type="RefSeq" id="WP_003414820.1">
    <property type="nucleotide sequence ID" value="NZ_NVQJ01000006.1"/>
</dbReference>
<dbReference type="PDB" id="2A11">
    <property type="method" value="X-ray"/>
    <property type="resolution" value="2.10 A"/>
    <property type="chains" value="A=1-240"/>
</dbReference>
<dbReference type="PDBsum" id="2A11"/>
<dbReference type="SMR" id="P9WH03"/>
<dbReference type="FunCoup" id="P9WH03">
    <property type="interactions" value="47"/>
</dbReference>
<dbReference type="STRING" id="83332.Rv2925c"/>
<dbReference type="PaxDb" id="83332-Rv2925c"/>
<dbReference type="DNASU" id="887873"/>
<dbReference type="GeneID" id="45426913"/>
<dbReference type="GeneID" id="887873"/>
<dbReference type="KEGG" id="mtu:Rv2925c"/>
<dbReference type="KEGG" id="mtv:RVBD_2925c"/>
<dbReference type="TubercuList" id="Rv2925c"/>
<dbReference type="eggNOG" id="COG0571">
    <property type="taxonomic scope" value="Bacteria"/>
</dbReference>
<dbReference type="InParanoid" id="P9WH03"/>
<dbReference type="OrthoDB" id="9805026at2"/>
<dbReference type="PhylomeDB" id="P9WH03"/>
<dbReference type="BRENDA" id="3.1.26.3">
    <property type="organism ID" value="3445"/>
</dbReference>
<dbReference type="EvolutionaryTrace" id="P9WH03"/>
<dbReference type="Proteomes" id="UP000001584">
    <property type="component" value="Chromosome"/>
</dbReference>
<dbReference type="GO" id="GO:0005829">
    <property type="term" value="C:cytosol"/>
    <property type="evidence" value="ECO:0000318"/>
    <property type="project" value="GO_Central"/>
</dbReference>
<dbReference type="GO" id="GO:0003725">
    <property type="term" value="F:double-stranded RNA binding"/>
    <property type="evidence" value="ECO:0000318"/>
    <property type="project" value="GO_Central"/>
</dbReference>
<dbReference type="GO" id="GO:0046872">
    <property type="term" value="F:metal ion binding"/>
    <property type="evidence" value="ECO:0007669"/>
    <property type="project" value="UniProtKB-KW"/>
</dbReference>
<dbReference type="GO" id="GO:0004525">
    <property type="term" value="F:ribonuclease III activity"/>
    <property type="evidence" value="ECO:0000318"/>
    <property type="project" value="GO_Central"/>
</dbReference>
<dbReference type="GO" id="GO:0006397">
    <property type="term" value="P:mRNA processing"/>
    <property type="evidence" value="ECO:0007669"/>
    <property type="project" value="UniProtKB-UniRule"/>
</dbReference>
<dbReference type="GO" id="GO:0010468">
    <property type="term" value="P:regulation of gene expression"/>
    <property type="evidence" value="ECO:0000318"/>
    <property type="project" value="GO_Central"/>
</dbReference>
<dbReference type="GO" id="GO:0006396">
    <property type="term" value="P:RNA processing"/>
    <property type="evidence" value="ECO:0000318"/>
    <property type="project" value="GO_Central"/>
</dbReference>
<dbReference type="GO" id="GO:0006364">
    <property type="term" value="P:rRNA processing"/>
    <property type="evidence" value="ECO:0007669"/>
    <property type="project" value="UniProtKB-UniRule"/>
</dbReference>
<dbReference type="GO" id="GO:0008033">
    <property type="term" value="P:tRNA processing"/>
    <property type="evidence" value="ECO:0007669"/>
    <property type="project" value="UniProtKB-KW"/>
</dbReference>
<dbReference type="CDD" id="cd10845">
    <property type="entry name" value="DSRM_RNAse_III_family"/>
    <property type="match status" value="1"/>
</dbReference>
<dbReference type="CDD" id="cd00593">
    <property type="entry name" value="RIBOc"/>
    <property type="match status" value="1"/>
</dbReference>
<dbReference type="FunFam" id="1.10.1520.10:FF:000001">
    <property type="entry name" value="Ribonuclease 3"/>
    <property type="match status" value="1"/>
</dbReference>
<dbReference type="FunFam" id="3.30.160.20:FF:000003">
    <property type="entry name" value="Ribonuclease 3"/>
    <property type="match status" value="1"/>
</dbReference>
<dbReference type="Gene3D" id="3.30.160.20">
    <property type="match status" value="1"/>
</dbReference>
<dbReference type="Gene3D" id="1.10.1520.10">
    <property type="entry name" value="Ribonuclease III domain"/>
    <property type="match status" value="1"/>
</dbReference>
<dbReference type="HAMAP" id="MF_00104">
    <property type="entry name" value="RNase_III"/>
    <property type="match status" value="1"/>
</dbReference>
<dbReference type="InterPro" id="IPR014720">
    <property type="entry name" value="dsRBD_dom"/>
</dbReference>
<dbReference type="InterPro" id="IPR011907">
    <property type="entry name" value="RNase_III"/>
</dbReference>
<dbReference type="InterPro" id="IPR000999">
    <property type="entry name" value="RNase_III_dom"/>
</dbReference>
<dbReference type="InterPro" id="IPR036389">
    <property type="entry name" value="RNase_III_sf"/>
</dbReference>
<dbReference type="NCBIfam" id="TIGR02191">
    <property type="entry name" value="RNaseIII"/>
    <property type="match status" value="1"/>
</dbReference>
<dbReference type="PANTHER" id="PTHR11207:SF0">
    <property type="entry name" value="RIBONUCLEASE 3"/>
    <property type="match status" value="1"/>
</dbReference>
<dbReference type="PANTHER" id="PTHR11207">
    <property type="entry name" value="RIBONUCLEASE III"/>
    <property type="match status" value="1"/>
</dbReference>
<dbReference type="Pfam" id="PF00035">
    <property type="entry name" value="dsrm"/>
    <property type="match status" value="1"/>
</dbReference>
<dbReference type="Pfam" id="PF14622">
    <property type="entry name" value="Ribonucleas_3_3"/>
    <property type="match status" value="1"/>
</dbReference>
<dbReference type="SMART" id="SM00358">
    <property type="entry name" value="DSRM"/>
    <property type="match status" value="1"/>
</dbReference>
<dbReference type="SMART" id="SM00535">
    <property type="entry name" value="RIBOc"/>
    <property type="match status" value="1"/>
</dbReference>
<dbReference type="SUPFAM" id="SSF54768">
    <property type="entry name" value="dsRNA-binding domain-like"/>
    <property type="match status" value="1"/>
</dbReference>
<dbReference type="SUPFAM" id="SSF69065">
    <property type="entry name" value="RNase III domain-like"/>
    <property type="match status" value="1"/>
</dbReference>
<dbReference type="PROSITE" id="PS50137">
    <property type="entry name" value="DS_RBD"/>
    <property type="match status" value="1"/>
</dbReference>
<dbReference type="PROSITE" id="PS00517">
    <property type="entry name" value="RNASE_3_1"/>
    <property type="match status" value="1"/>
</dbReference>
<dbReference type="PROSITE" id="PS50142">
    <property type="entry name" value="RNASE_3_2"/>
    <property type="match status" value="1"/>
</dbReference>
<name>RNC_MYCTU</name>
<sequence>MIRSRQPLLDALGVDLPDELLSLALTHRSYAYENGGLPTNERLEFLGDAVLGLTITDALFHRHPDRSEGDLAKLRASVVNTQALADVARRLCAEGLGVHVLLGRGEANTGGADKSSILADGMESLLGAIYLQHGMEKAREVILRLFGPLLDAAPTLGAGLDWKTSLQELTAARGLGAPSYLVTSTGPDHDKEFTAVVVVMDSEYGSGVGRSKKEAEQKAAAAAWKALEVLDNAMPGKTSA</sequence>
<reference key="1">
    <citation type="journal article" date="1998" name="Nature">
        <title>Deciphering the biology of Mycobacterium tuberculosis from the complete genome sequence.</title>
        <authorList>
            <person name="Cole S.T."/>
            <person name="Brosch R."/>
            <person name="Parkhill J."/>
            <person name="Garnier T."/>
            <person name="Churcher C.M."/>
            <person name="Harris D.E."/>
            <person name="Gordon S.V."/>
            <person name="Eiglmeier K."/>
            <person name="Gas S."/>
            <person name="Barry C.E. III"/>
            <person name="Tekaia F."/>
            <person name="Badcock K."/>
            <person name="Basham D."/>
            <person name="Brown D."/>
            <person name="Chillingworth T."/>
            <person name="Connor R."/>
            <person name="Davies R.M."/>
            <person name="Devlin K."/>
            <person name="Feltwell T."/>
            <person name="Gentles S."/>
            <person name="Hamlin N."/>
            <person name="Holroyd S."/>
            <person name="Hornsby T."/>
            <person name="Jagels K."/>
            <person name="Krogh A."/>
            <person name="McLean J."/>
            <person name="Moule S."/>
            <person name="Murphy L.D."/>
            <person name="Oliver S."/>
            <person name="Osborne J."/>
            <person name="Quail M.A."/>
            <person name="Rajandream M.A."/>
            <person name="Rogers J."/>
            <person name="Rutter S."/>
            <person name="Seeger K."/>
            <person name="Skelton S."/>
            <person name="Squares S."/>
            <person name="Squares R."/>
            <person name="Sulston J.E."/>
            <person name="Taylor K."/>
            <person name="Whitehead S."/>
            <person name="Barrell B.G."/>
        </authorList>
    </citation>
    <scope>NUCLEOTIDE SEQUENCE [LARGE SCALE GENOMIC DNA]</scope>
    <source>
        <strain>ATCC 25618 / H37Rv</strain>
    </source>
</reference>
<reference key="2">
    <citation type="journal article" date="2008" name="BMC Syst. Biol.">
        <title>targetTB: a target identification pipeline for Mycobacterium tuberculosis through an interactome, reactome and genome-scale structural analysis.</title>
        <authorList>
            <person name="Raman K."/>
            <person name="Yeturu K."/>
            <person name="Chandra N."/>
        </authorList>
    </citation>
    <scope>IDENTIFICATION AS A DRUG TARGET [LARGE SCALE ANALYSIS]</scope>
</reference>
<reference key="3">
    <citation type="journal article" date="2011" name="Mol. Cell. Proteomics">
        <title>Proteogenomic analysis of Mycobacterium tuberculosis by high resolution mass spectrometry.</title>
        <authorList>
            <person name="Kelkar D.S."/>
            <person name="Kumar D."/>
            <person name="Kumar P."/>
            <person name="Balakrishnan L."/>
            <person name="Muthusamy B."/>
            <person name="Yadav A.K."/>
            <person name="Shrivastava P."/>
            <person name="Marimuthu A."/>
            <person name="Anand S."/>
            <person name="Sundaram H."/>
            <person name="Kingsbury R."/>
            <person name="Harsha H.C."/>
            <person name="Nair B."/>
            <person name="Prasad T.S."/>
            <person name="Chauhan D.S."/>
            <person name="Katoch K."/>
            <person name="Katoch V.M."/>
            <person name="Kumar P."/>
            <person name="Chaerkady R."/>
            <person name="Ramachandran S."/>
            <person name="Dash D."/>
            <person name="Pandey A."/>
        </authorList>
    </citation>
    <scope>IDENTIFICATION BY MASS SPECTROMETRY [LARGE SCALE ANALYSIS]</scope>
    <source>
        <strain>ATCC 25618 / H37Rv</strain>
    </source>
</reference>
<reference key="4">
    <citation type="journal article" date="2005" name="Protein Sci.">
        <title>Structure of the nuclease domain of ribonuclease III from M. tuberculosis at 2.1 A.</title>
        <authorList>
            <person name="Akey D.L."/>
            <person name="Berger J.M."/>
        </authorList>
    </citation>
    <scope>X-RAY CRYSTALLOGRAPHY (2.1 ANGSTROMS)</scope>
    <scope>SUBUNIT</scope>
    <source>
        <strain>ATCC 25618 / H37Rv</strain>
    </source>
</reference>
<gene>
    <name type="primary">rnc</name>
    <name type="ordered locus">Rv2925c</name>
    <name type="ORF">MTCY338.14c</name>
</gene>
<keyword id="KW-0002">3D-structure</keyword>
<keyword id="KW-0963">Cytoplasm</keyword>
<keyword id="KW-0255">Endonuclease</keyword>
<keyword id="KW-0378">Hydrolase</keyword>
<keyword id="KW-0460">Magnesium</keyword>
<keyword id="KW-0479">Metal-binding</keyword>
<keyword id="KW-0507">mRNA processing</keyword>
<keyword id="KW-0540">Nuclease</keyword>
<keyword id="KW-1185">Reference proteome</keyword>
<keyword id="KW-0694">RNA-binding</keyword>
<keyword id="KW-0698">rRNA processing</keyword>
<keyword id="KW-0819">tRNA processing</keyword>
<proteinExistence type="evidence at protein level"/>